<comment type="function">
    <text evidence="1">Binds together with bS18 to 16S ribosomal RNA.</text>
</comment>
<comment type="similarity">
    <text evidence="3">Belongs to the bacterial ribosomal protein bS6 family.</text>
</comment>
<organism>
    <name type="scientific">Xylella fastidiosa (strain 9a5c)</name>
    <dbReference type="NCBI Taxonomy" id="160492"/>
    <lineage>
        <taxon>Bacteria</taxon>
        <taxon>Pseudomonadati</taxon>
        <taxon>Pseudomonadota</taxon>
        <taxon>Gammaproteobacteria</taxon>
        <taxon>Lysobacterales</taxon>
        <taxon>Lysobacteraceae</taxon>
        <taxon>Xylella</taxon>
    </lineage>
</organism>
<feature type="chain" id="PRO_0000176879" description="Small ribosomal subunit protein bS6">
    <location>
        <begin position="1"/>
        <end position="143"/>
    </location>
</feature>
<feature type="region of interest" description="Disordered" evidence="2">
    <location>
        <begin position="95"/>
        <end position="143"/>
    </location>
</feature>
<feature type="compositionally biased region" description="Basic and acidic residues" evidence="2">
    <location>
        <begin position="105"/>
        <end position="121"/>
    </location>
</feature>
<accession>P66604</accession>
<accession>Q9PAF7</accession>
<gene>
    <name type="primary">rpsF</name>
    <name type="ordered locus">XF_2561</name>
</gene>
<keyword id="KW-0687">Ribonucleoprotein</keyword>
<keyword id="KW-0689">Ribosomal protein</keyword>
<keyword id="KW-0694">RNA-binding</keyword>
<keyword id="KW-0699">rRNA-binding</keyword>
<reference key="1">
    <citation type="journal article" date="2000" name="Nature">
        <title>The genome sequence of the plant pathogen Xylella fastidiosa.</title>
        <authorList>
            <person name="Simpson A.J.G."/>
            <person name="Reinach F.C."/>
            <person name="Arruda P."/>
            <person name="Abreu F.A."/>
            <person name="Acencio M."/>
            <person name="Alvarenga R."/>
            <person name="Alves L.M.C."/>
            <person name="Araya J.E."/>
            <person name="Baia G.S."/>
            <person name="Baptista C.S."/>
            <person name="Barros M.H."/>
            <person name="Bonaccorsi E.D."/>
            <person name="Bordin S."/>
            <person name="Bove J.M."/>
            <person name="Briones M.R.S."/>
            <person name="Bueno M.R.P."/>
            <person name="Camargo A.A."/>
            <person name="Camargo L.E.A."/>
            <person name="Carraro D.M."/>
            <person name="Carrer H."/>
            <person name="Colauto N.B."/>
            <person name="Colombo C."/>
            <person name="Costa F.F."/>
            <person name="Costa M.C.R."/>
            <person name="Costa-Neto C.M."/>
            <person name="Coutinho L.L."/>
            <person name="Cristofani M."/>
            <person name="Dias-Neto E."/>
            <person name="Docena C."/>
            <person name="El-Dorry H."/>
            <person name="Facincani A.P."/>
            <person name="Ferreira A.J.S."/>
            <person name="Ferreira V.C.A."/>
            <person name="Ferro J.A."/>
            <person name="Fraga J.S."/>
            <person name="Franca S.C."/>
            <person name="Franco M.C."/>
            <person name="Frohme M."/>
            <person name="Furlan L.R."/>
            <person name="Garnier M."/>
            <person name="Goldman G.H."/>
            <person name="Goldman M.H.S."/>
            <person name="Gomes S.L."/>
            <person name="Gruber A."/>
            <person name="Ho P.L."/>
            <person name="Hoheisel J.D."/>
            <person name="Junqueira M.L."/>
            <person name="Kemper E.L."/>
            <person name="Kitajima J.P."/>
            <person name="Krieger J.E."/>
            <person name="Kuramae E.E."/>
            <person name="Laigret F."/>
            <person name="Lambais M.R."/>
            <person name="Leite L.C.C."/>
            <person name="Lemos E.G.M."/>
            <person name="Lemos M.V.F."/>
            <person name="Lopes S.A."/>
            <person name="Lopes C.R."/>
            <person name="Machado J.A."/>
            <person name="Machado M.A."/>
            <person name="Madeira A.M.B.N."/>
            <person name="Madeira H.M.F."/>
            <person name="Marino C.L."/>
            <person name="Marques M.V."/>
            <person name="Martins E.A.L."/>
            <person name="Martins E.M.F."/>
            <person name="Matsukuma A.Y."/>
            <person name="Menck C.F.M."/>
            <person name="Miracca E.C."/>
            <person name="Miyaki C.Y."/>
            <person name="Monteiro-Vitorello C.B."/>
            <person name="Moon D.H."/>
            <person name="Nagai M.A."/>
            <person name="Nascimento A.L.T.O."/>
            <person name="Netto L.E.S."/>
            <person name="Nhani A. Jr."/>
            <person name="Nobrega F.G."/>
            <person name="Nunes L.R."/>
            <person name="Oliveira M.A."/>
            <person name="de Oliveira M.C."/>
            <person name="de Oliveira R.C."/>
            <person name="Palmieri D.A."/>
            <person name="Paris A."/>
            <person name="Peixoto B.R."/>
            <person name="Pereira G.A.G."/>
            <person name="Pereira H.A. Jr."/>
            <person name="Pesquero J.B."/>
            <person name="Quaggio R.B."/>
            <person name="Roberto P.G."/>
            <person name="Rodrigues V."/>
            <person name="de Rosa A.J.M."/>
            <person name="de Rosa V.E. Jr."/>
            <person name="de Sa R.G."/>
            <person name="Santelli R.V."/>
            <person name="Sawasaki H.E."/>
            <person name="da Silva A.C.R."/>
            <person name="da Silva A.M."/>
            <person name="da Silva F.R."/>
            <person name="Silva W.A. Jr."/>
            <person name="da Silveira J.F."/>
            <person name="Silvestri M.L.Z."/>
            <person name="Siqueira W.J."/>
            <person name="de Souza A.A."/>
            <person name="de Souza A.P."/>
            <person name="Terenzi M.F."/>
            <person name="Truffi D."/>
            <person name="Tsai S.M."/>
            <person name="Tsuhako M.H."/>
            <person name="Vallada H."/>
            <person name="Van Sluys M.A."/>
            <person name="Verjovski-Almeida S."/>
            <person name="Vettore A.L."/>
            <person name="Zago M.A."/>
            <person name="Zatz M."/>
            <person name="Meidanis J."/>
            <person name="Setubal J.C."/>
        </authorList>
    </citation>
    <scope>NUCLEOTIDE SEQUENCE [LARGE SCALE GENOMIC DNA]</scope>
    <source>
        <strain>9a5c</strain>
    </source>
</reference>
<name>RS6_XYLFA</name>
<dbReference type="EMBL" id="AE003849">
    <property type="protein sequence ID" value="AAF85358.1"/>
    <property type="molecule type" value="Genomic_DNA"/>
</dbReference>
<dbReference type="PIR" id="D82543">
    <property type="entry name" value="D82543"/>
</dbReference>
<dbReference type="RefSeq" id="WP_004090345.1">
    <property type="nucleotide sequence ID" value="NC_002488.3"/>
</dbReference>
<dbReference type="SMR" id="P66604"/>
<dbReference type="STRING" id="160492.XF_2561"/>
<dbReference type="GeneID" id="93905806"/>
<dbReference type="KEGG" id="xfa:XF_2561"/>
<dbReference type="eggNOG" id="COG0360">
    <property type="taxonomic scope" value="Bacteria"/>
</dbReference>
<dbReference type="HOGENOM" id="CLU_113441_6_0_6"/>
<dbReference type="Proteomes" id="UP000000812">
    <property type="component" value="Chromosome"/>
</dbReference>
<dbReference type="GO" id="GO:0022627">
    <property type="term" value="C:cytosolic small ribosomal subunit"/>
    <property type="evidence" value="ECO:0007669"/>
    <property type="project" value="TreeGrafter"/>
</dbReference>
<dbReference type="GO" id="GO:0070181">
    <property type="term" value="F:small ribosomal subunit rRNA binding"/>
    <property type="evidence" value="ECO:0007669"/>
    <property type="project" value="TreeGrafter"/>
</dbReference>
<dbReference type="GO" id="GO:0003735">
    <property type="term" value="F:structural constituent of ribosome"/>
    <property type="evidence" value="ECO:0007669"/>
    <property type="project" value="InterPro"/>
</dbReference>
<dbReference type="GO" id="GO:0006412">
    <property type="term" value="P:translation"/>
    <property type="evidence" value="ECO:0007669"/>
    <property type="project" value="UniProtKB-UniRule"/>
</dbReference>
<dbReference type="CDD" id="cd00473">
    <property type="entry name" value="bS6"/>
    <property type="match status" value="1"/>
</dbReference>
<dbReference type="Gene3D" id="3.30.70.60">
    <property type="match status" value="1"/>
</dbReference>
<dbReference type="HAMAP" id="MF_00360">
    <property type="entry name" value="Ribosomal_bS6"/>
    <property type="match status" value="1"/>
</dbReference>
<dbReference type="InterPro" id="IPR000529">
    <property type="entry name" value="Ribosomal_bS6"/>
</dbReference>
<dbReference type="InterPro" id="IPR035980">
    <property type="entry name" value="Ribosomal_bS6_sf"/>
</dbReference>
<dbReference type="InterPro" id="IPR020814">
    <property type="entry name" value="Ribosomal_S6_plastid/chlpt"/>
</dbReference>
<dbReference type="InterPro" id="IPR014717">
    <property type="entry name" value="Transl_elong_EF1B/ribsomal_bS6"/>
</dbReference>
<dbReference type="NCBIfam" id="TIGR00166">
    <property type="entry name" value="S6"/>
    <property type="match status" value="1"/>
</dbReference>
<dbReference type="PANTHER" id="PTHR21011">
    <property type="entry name" value="MITOCHONDRIAL 28S RIBOSOMAL PROTEIN S6"/>
    <property type="match status" value="1"/>
</dbReference>
<dbReference type="PANTHER" id="PTHR21011:SF1">
    <property type="entry name" value="SMALL RIBOSOMAL SUBUNIT PROTEIN BS6M"/>
    <property type="match status" value="1"/>
</dbReference>
<dbReference type="Pfam" id="PF01250">
    <property type="entry name" value="Ribosomal_S6"/>
    <property type="match status" value="1"/>
</dbReference>
<dbReference type="SUPFAM" id="SSF54995">
    <property type="entry name" value="Ribosomal protein S6"/>
    <property type="match status" value="1"/>
</dbReference>
<protein>
    <recommendedName>
        <fullName evidence="3">Small ribosomal subunit protein bS6</fullName>
    </recommendedName>
    <alternativeName>
        <fullName>30S ribosomal protein S6</fullName>
    </alternativeName>
</protein>
<proteinExistence type="inferred from homology"/>
<sequence>MGRHYEIVLLVHPDQSEQVQAMLERYKALIENGHGKIHRLEDWGRRQLAYPIQKLVKAHYLMMNIEVEQSVLNELVDLFRFNDAILRHLAIKRSGPDTEQSFIMKSKDDKGDKPERRRRDDDENGDVGVSNDSDNDGGNAEAA</sequence>
<evidence type="ECO:0000250" key="1"/>
<evidence type="ECO:0000256" key="2">
    <source>
        <dbReference type="SAM" id="MobiDB-lite"/>
    </source>
</evidence>
<evidence type="ECO:0000305" key="3"/>